<protein>
    <recommendedName>
        <fullName evidence="1">Transcription termination/antitermination protein NusG</fullName>
    </recommendedName>
</protein>
<name>NUSG_BUCAI</name>
<dbReference type="EMBL" id="BA000003">
    <property type="protein sequence ID" value="BAB12766.1"/>
    <property type="molecule type" value="Genomic_DNA"/>
</dbReference>
<dbReference type="RefSeq" id="NP_239880.1">
    <property type="nucleotide sequence ID" value="NC_002528.1"/>
</dbReference>
<dbReference type="RefSeq" id="WP_009874000.1">
    <property type="nucleotide sequence ID" value="NZ_AP036055.1"/>
</dbReference>
<dbReference type="SMR" id="P57151"/>
<dbReference type="STRING" id="563178.BUAP5A_038"/>
<dbReference type="EnsemblBacteria" id="BAB12766">
    <property type="protein sequence ID" value="BAB12766"/>
    <property type="gene ID" value="BAB12766"/>
</dbReference>
<dbReference type="KEGG" id="buc:BU039"/>
<dbReference type="PATRIC" id="fig|107806.10.peg.52"/>
<dbReference type="eggNOG" id="COG0250">
    <property type="taxonomic scope" value="Bacteria"/>
</dbReference>
<dbReference type="HOGENOM" id="CLU_067287_1_0_6"/>
<dbReference type="Proteomes" id="UP000001806">
    <property type="component" value="Chromosome"/>
</dbReference>
<dbReference type="GO" id="GO:0005829">
    <property type="term" value="C:cytosol"/>
    <property type="evidence" value="ECO:0007669"/>
    <property type="project" value="TreeGrafter"/>
</dbReference>
<dbReference type="GO" id="GO:0006353">
    <property type="term" value="P:DNA-templated transcription termination"/>
    <property type="evidence" value="ECO:0007669"/>
    <property type="project" value="UniProtKB-UniRule"/>
</dbReference>
<dbReference type="GO" id="GO:0032784">
    <property type="term" value="P:regulation of DNA-templated transcription elongation"/>
    <property type="evidence" value="ECO:0007669"/>
    <property type="project" value="InterPro"/>
</dbReference>
<dbReference type="GO" id="GO:0031564">
    <property type="term" value="P:transcription antitermination"/>
    <property type="evidence" value="ECO:0007669"/>
    <property type="project" value="UniProtKB-UniRule"/>
</dbReference>
<dbReference type="GO" id="GO:0140673">
    <property type="term" value="P:transcription elongation-coupled chromatin remodeling"/>
    <property type="evidence" value="ECO:0007669"/>
    <property type="project" value="InterPro"/>
</dbReference>
<dbReference type="CDD" id="cd06091">
    <property type="entry name" value="KOW_NusG"/>
    <property type="match status" value="1"/>
</dbReference>
<dbReference type="CDD" id="cd09891">
    <property type="entry name" value="NGN_Bact_1"/>
    <property type="match status" value="1"/>
</dbReference>
<dbReference type="FunFam" id="2.30.30.30:FF:000002">
    <property type="entry name" value="Transcription termination/antitermination factor NusG"/>
    <property type="match status" value="1"/>
</dbReference>
<dbReference type="FunFam" id="3.30.70.940:FF:000001">
    <property type="entry name" value="Transcription termination/antitermination protein NusG"/>
    <property type="match status" value="1"/>
</dbReference>
<dbReference type="Gene3D" id="2.30.30.30">
    <property type="match status" value="1"/>
</dbReference>
<dbReference type="Gene3D" id="3.30.70.940">
    <property type="entry name" value="NusG, N-terminal domain"/>
    <property type="match status" value="1"/>
</dbReference>
<dbReference type="HAMAP" id="MF_00948">
    <property type="entry name" value="NusG"/>
    <property type="match status" value="1"/>
</dbReference>
<dbReference type="InterPro" id="IPR005824">
    <property type="entry name" value="KOW"/>
</dbReference>
<dbReference type="InterPro" id="IPR047050">
    <property type="entry name" value="NGN"/>
</dbReference>
<dbReference type="InterPro" id="IPR006645">
    <property type="entry name" value="NGN-like_dom"/>
</dbReference>
<dbReference type="InterPro" id="IPR036735">
    <property type="entry name" value="NGN_dom_sf"/>
</dbReference>
<dbReference type="InterPro" id="IPR043425">
    <property type="entry name" value="NusG-like"/>
</dbReference>
<dbReference type="InterPro" id="IPR014722">
    <property type="entry name" value="Rib_uL2_dom2"/>
</dbReference>
<dbReference type="InterPro" id="IPR001062">
    <property type="entry name" value="Transcrpt_antiterm_NusG"/>
</dbReference>
<dbReference type="InterPro" id="IPR015869">
    <property type="entry name" value="Transcrpt_antiterm_NusG_bac_CS"/>
</dbReference>
<dbReference type="InterPro" id="IPR008991">
    <property type="entry name" value="Translation_prot_SH3-like_sf"/>
</dbReference>
<dbReference type="NCBIfam" id="TIGR00922">
    <property type="entry name" value="nusG"/>
    <property type="match status" value="1"/>
</dbReference>
<dbReference type="PANTHER" id="PTHR30265">
    <property type="entry name" value="RHO-INTERACTING TRANSCRIPTION TERMINATION FACTOR NUSG"/>
    <property type="match status" value="1"/>
</dbReference>
<dbReference type="PANTHER" id="PTHR30265:SF2">
    <property type="entry name" value="TRANSCRIPTION TERMINATION_ANTITERMINATION PROTEIN NUSG"/>
    <property type="match status" value="1"/>
</dbReference>
<dbReference type="Pfam" id="PF00467">
    <property type="entry name" value="KOW"/>
    <property type="match status" value="1"/>
</dbReference>
<dbReference type="Pfam" id="PF02357">
    <property type="entry name" value="NusG"/>
    <property type="match status" value="1"/>
</dbReference>
<dbReference type="PRINTS" id="PR00338">
    <property type="entry name" value="NUSGTNSCPFCT"/>
</dbReference>
<dbReference type="SMART" id="SM00739">
    <property type="entry name" value="KOW"/>
    <property type="match status" value="1"/>
</dbReference>
<dbReference type="SMART" id="SM00738">
    <property type="entry name" value="NGN"/>
    <property type="match status" value="1"/>
</dbReference>
<dbReference type="SUPFAM" id="SSF82679">
    <property type="entry name" value="N-utilization substance G protein NusG, N-terminal domain"/>
    <property type="match status" value="1"/>
</dbReference>
<dbReference type="SUPFAM" id="SSF50104">
    <property type="entry name" value="Translation proteins SH3-like domain"/>
    <property type="match status" value="1"/>
</dbReference>
<dbReference type="PROSITE" id="PS01014">
    <property type="entry name" value="NUSG"/>
    <property type="match status" value="1"/>
</dbReference>
<accession>P57151</accession>
<feature type="chain" id="PRO_0000113918" description="Transcription termination/antitermination protein NusG">
    <location>
        <begin position="1"/>
        <end position="181"/>
    </location>
</feature>
<feature type="domain" description="KOW" evidence="1">
    <location>
        <begin position="130"/>
        <end position="161"/>
    </location>
</feature>
<evidence type="ECO:0000255" key="1">
    <source>
        <dbReference type="HAMAP-Rule" id="MF_00948"/>
    </source>
</evidence>
<comment type="function">
    <text evidence="1">Participates in transcription elongation, termination and antitermination. In the absence of Rho, increases the rate of transcription elongation by the RNA polymerase (RNAP), probably by partially suppressing pausing. In the presence of Rho, modulates most Rho-dependent termination events by interacting with the RNAP to render the complex more susceptible to the termination activity of Rho. May be required to overcome a kinetic limitation of Rho to function at certain terminators. Also involved in ribosomal RNA transcriptional antitermination.</text>
</comment>
<comment type="subunit">
    <text evidence="1">Monomer. Interacts with the transcription termination factor Rho and with RNA polymerase.</text>
</comment>
<comment type="similarity">
    <text evidence="1">Belongs to the NusG family.</text>
</comment>
<gene>
    <name evidence="1" type="primary">nusG</name>
    <name type="ordered locus">BU039</name>
</gene>
<reference key="1">
    <citation type="journal article" date="2000" name="Nature">
        <title>Genome sequence of the endocellular bacterial symbiont of aphids Buchnera sp. APS.</title>
        <authorList>
            <person name="Shigenobu S."/>
            <person name="Watanabe H."/>
            <person name="Hattori M."/>
            <person name="Sakaki Y."/>
            <person name="Ishikawa H."/>
        </authorList>
    </citation>
    <scope>NUCLEOTIDE SEQUENCE [LARGE SCALE GENOMIC DNA]</scope>
    <source>
        <strain>APS</strain>
    </source>
</reference>
<organism>
    <name type="scientific">Buchnera aphidicola subsp. Acyrthosiphon pisum (strain APS)</name>
    <name type="common">Acyrthosiphon pisum symbiotic bacterium</name>
    <dbReference type="NCBI Taxonomy" id="107806"/>
    <lineage>
        <taxon>Bacteria</taxon>
        <taxon>Pseudomonadati</taxon>
        <taxon>Pseudomonadota</taxon>
        <taxon>Gammaproteobacteria</taxon>
        <taxon>Enterobacterales</taxon>
        <taxon>Erwiniaceae</taxon>
        <taxon>Buchnera</taxon>
    </lineage>
</organism>
<keyword id="KW-1185">Reference proteome</keyword>
<keyword id="KW-0804">Transcription</keyword>
<keyword id="KW-0889">Transcription antitermination</keyword>
<keyword id="KW-0805">Transcription regulation</keyword>
<keyword id="KW-0806">Transcription termination</keyword>
<proteinExistence type="inferred from homology"/>
<sequence length="181" mass="20960">MHESQKKRWYVLQAFSGFESRVAQSIREHVKLNQMEDLFGEVMVPSQEVVEIRGGQRRKSEYKFFPGYVLIQMKMTDSTWHLIRNVPKVLGFIGGKSDKPSPISDKEVEIIINRLRKIGNKPRPKTLFEPGEMIRVNDGPFADFNGVVEEVDYEKSRLKVSVSIFGRSTPVELDFRQVEKN</sequence>